<sequence length="479" mass="53486">MNFETIIGLEVHVELNTNSKIFSPSSAHFGEDPNANTNVIDWSFPGVLPVMNKGVIDAGIKAALALNMDIHKEMHFDRKNYFYPDNPKAYQISQFDEPIGYNGWIEIKLEDGSTKKIRIERAHLEEDAGKNTHGTDGYSYVDLNRQGVPLIEIVSEADMRSPEEAYAYLTALKEIIQYTGISDVKMEEGSMRVDANISLRPYGQEQFGTKTELKNLNSFSNVRKGLEFEVERQAKLLRSGGVIRQETRRYDEANKGTILMRVKEGAADYRYFPEPDLPLYEIDDAWIDEMRAQLPQFPAQRRAKYEEELGLSAYDASQLTATKALSDFFETAVSLGGDAKQVSNWLQGEVAQFLNAEGKTIEEIRLTPDNLVEMIAIIADGTISSKMAKKVFVHLAKNGGSARAYVEKAGLVQISDPAVLVPIIHQVFADNEAAVADFKSGKRNADKAFTGFLMKATKGQANPQVAQQLLAQELQKLRD</sequence>
<protein>
    <recommendedName>
        <fullName evidence="1">Aspartyl/glutamyl-tRNA(Asn/Gln) amidotransferase subunit B</fullName>
        <shortName evidence="1">Asp/Glu-ADT subunit B</shortName>
        <ecNumber evidence="1">6.3.5.-</ecNumber>
    </recommendedName>
</protein>
<name>GATB_STRPM</name>
<keyword id="KW-0067">ATP-binding</keyword>
<keyword id="KW-0436">Ligase</keyword>
<keyword id="KW-0547">Nucleotide-binding</keyword>
<keyword id="KW-0648">Protein biosynthesis</keyword>
<comment type="function">
    <text evidence="1">Allows the formation of correctly charged Asn-tRNA(Asn) or Gln-tRNA(Gln) through the transamidation of misacylated Asp-tRNA(Asn) or Glu-tRNA(Gln) in organisms which lack either or both of asparaginyl-tRNA or glutaminyl-tRNA synthetases. The reaction takes place in the presence of glutamine and ATP through an activated phospho-Asp-tRNA(Asn) or phospho-Glu-tRNA(Gln).</text>
</comment>
<comment type="catalytic activity">
    <reaction evidence="1">
        <text>L-glutamyl-tRNA(Gln) + L-glutamine + ATP + H2O = L-glutaminyl-tRNA(Gln) + L-glutamate + ADP + phosphate + H(+)</text>
        <dbReference type="Rhea" id="RHEA:17521"/>
        <dbReference type="Rhea" id="RHEA-COMP:9681"/>
        <dbReference type="Rhea" id="RHEA-COMP:9684"/>
        <dbReference type="ChEBI" id="CHEBI:15377"/>
        <dbReference type="ChEBI" id="CHEBI:15378"/>
        <dbReference type="ChEBI" id="CHEBI:29985"/>
        <dbReference type="ChEBI" id="CHEBI:30616"/>
        <dbReference type="ChEBI" id="CHEBI:43474"/>
        <dbReference type="ChEBI" id="CHEBI:58359"/>
        <dbReference type="ChEBI" id="CHEBI:78520"/>
        <dbReference type="ChEBI" id="CHEBI:78521"/>
        <dbReference type="ChEBI" id="CHEBI:456216"/>
    </reaction>
</comment>
<comment type="catalytic activity">
    <reaction evidence="1">
        <text>L-aspartyl-tRNA(Asn) + L-glutamine + ATP + H2O = L-asparaginyl-tRNA(Asn) + L-glutamate + ADP + phosphate + 2 H(+)</text>
        <dbReference type="Rhea" id="RHEA:14513"/>
        <dbReference type="Rhea" id="RHEA-COMP:9674"/>
        <dbReference type="Rhea" id="RHEA-COMP:9677"/>
        <dbReference type="ChEBI" id="CHEBI:15377"/>
        <dbReference type="ChEBI" id="CHEBI:15378"/>
        <dbReference type="ChEBI" id="CHEBI:29985"/>
        <dbReference type="ChEBI" id="CHEBI:30616"/>
        <dbReference type="ChEBI" id="CHEBI:43474"/>
        <dbReference type="ChEBI" id="CHEBI:58359"/>
        <dbReference type="ChEBI" id="CHEBI:78515"/>
        <dbReference type="ChEBI" id="CHEBI:78516"/>
        <dbReference type="ChEBI" id="CHEBI:456216"/>
    </reaction>
</comment>
<comment type="subunit">
    <text evidence="1">Heterotrimer of A, B and C subunits.</text>
</comment>
<comment type="similarity">
    <text evidence="1">Belongs to the GatB/GatE family. GatB subfamily.</text>
</comment>
<evidence type="ECO:0000255" key="1">
    <source>
        <dbReference type="HAMAP-Rule" id="MF_00121"/>
    </source>
</evidence>
<accession>Q48RQ5</accession>
<proteinExistence type="inferred from homology"/>
<dbReference type="EC" id="6.3.5.-" evidence="1"/>
<dbReference type="EMBL" id="CP000056">
    <property type="protein sequence ID" value="AAX72605.1"/>
    <property type="molecule type" value="Genomic_DNA"/>
</dbReference>
<dbReference type="RefSeq" id="WP_002983292.1">
    <property type="nucleotide sequence ID" value="NC_007296.2"/>
</dbReference>
<dbReference type="SMR" id="Q48RQ5"/>
<dbReference type="KEGG" id="spb:M28_Spy1495"/>
<dbReference type="HOGENOM" id="CLU_019240_0_0_9"/>
<dbReference type="GO" id="GO:0050566">
    <property type="term" value="F:asparaginyl-tRNA synthase (glutamine-hydrolyzing) activity"/>
    <property type="evidence" value="ECO:0007669"/>
    <property type="project" value="RHEA"/>
</dbReference>
<dbReference type="GO" id="GO:0005524">
    <property type="term" value="F:ATP binding"/>
    <property type="evidence" value="ECO:0007669"/>
    <property type="project" value="UniProtKB-KW"/>
</dbReference>
<dbReference type="GO" id="GO:0050567">
    <property type="term" value="F:glutaminyl-tRNA synthase (glutamine-hydrolyzing) activity"/>
    <property type="evidence" value="ECO:0007669"/>
    <property type="project" value="UniProtKB-UniRule"/>
</dbReference>
<dbReference type="GO" id="GO:0070681">
    <property type="term" value="P:glutaminyl-tRNAGln biosynthesis via transamidation"/>
    <property type="evidence" value="ECO:0007669"/>
    <property type="project" value="TreeGrafter"/>
</dbReference>
<dbReference type="GO" id="GO:0006412">
    <property type="term" value="P:translation"/>
    <property type="evidence" value="ECO:0007669"/>
    <property type="project" value="UniProtKB-UniRule"/>
</dbReference>
<dbReference type="FunFam" id="1.10.10.410:FF:000001">
    <property type="entry name" value="Aspartyl/glutamyl-tRNA(Asn/Gln) amidotransferase subunit B"/>
    <property type="match status" value="1"/>
</dbReference>
<dbReference type="FunFam" id="1.10.150.380:FF:000001">
    <property type="entry name" value="Aspartyl/glutamyl-tRNA(Asn/Gln) amidotransferase subunit B"/>
    <property type="match status" value="1"/>
</dbReference>
<dbReference type="Gene3D" id="1.10.10.410">
    <property type="match status" value="1"/>
</dbReference>
<dbReference type="Gene3D" id="1.10.150.380">
    <property type="entry name" value="GatB domain, N-terminal subdomain"/>
    <property type="match status" value="1"/>
</dbReference>
<dbReference type="HAMAP" id="MF_00121">
    <property type="entry name" value="GatB"/>
    <property type="match status" value="1"/>
</dbReference>
<dbReference type="InterPro" id="IPR017959">
    <property type="entry name" value="Asn/Gln-tRNA_amidoTrfase_suB/E"/>
</dbReference>
<dbReference type="InterPro" id="IPR006075">
    <property type="entry name" value="Asn/Gln-tRNA_Trfase_suB/E_cat"/>
</dbReference>
<dbReference type="InterPro" id="IPR018027">
    <property type="entry name" value="Asn/Gln_amidotransferase"/>
</dbReference>
<dbReference type="InterPro" id="IPR003789">
    <property type="entry name" value="Asn/Gln_tRNA_amidoTrase-B-like"/>
</dbReference>
<dbReference type="InterPro" id="IPR004413">
    <property type="entry name" value="GatB"/>
</dbReference>
<dbReference type="InterPro" id="IPR042114">
    <property type="entry name" value="GatB_C_1"/>
</dbReference>
<dbReference type="InterPro" id="IPR023168">
    <property type="entry name" value="GatB_Yqey_C_2"/>
</dbReference>
<dbReference type="InterPro" id="IPR017958">
    <property type="entry name" value="Gln-tRNA_amidoTrfase_suB_CS"/>
</dbReference>
<dbReference type="InterPro" id="IPR014746">
    <property type="entry name" value="Gln_synth/guanido_kin_cat_dom"/>
</dbReference>
<dbReference type="NCBIfam" id="TIGR00133">
    <property type="entry name" value="gatB"/>
    <property type="match status" value="1"/>
</dbReference>
<dbReference type="NCBIfam" id="NF004011">
    <property type="entry name" value="PRK05477.1-1"/>
    <property type="match status" value="1"/>
</dbReference>
<dbReference type="NCBIfam" id="NF004012">
    <property type="entry name" value="PRK05477.1-2"/>
    <property type="match status" value="1"/>
</dbReference>
<dbReference type="NCBIfam" id="NF004014">
    <property type="entry name" value="PRK05477.1-4"/>
    <property type="match status" value="1"/>
</dbReference>
<dbReference type="PANTHER" id="PTHR11659">
    <property type="entry name" value="GLUTAMYL-TRNA GLN AMIDOTRANSFERASE SUBUNIT B MITOCHONDRIAL AND PROKARYOTIC PET112-RELATED"/>
    <property type="match status" value="1"/>
</dbReference>
<dbReference type="PANTHER" id="PTHR11659:SF0">
    <property type="entry name" value="GLUTAMYL-TRNA(GLN) AMIDOTRANSFERASE SUBUNIT B, MITOCHONDRIAL"/>
    <property type="match status" value="1"/>
</dbReference>
<dbReference type="Pfam" id="PF02934">
    <property type="entry name" value="GatB_N"/>
    <property type="match status" value="1"/>
</dbReference>
<dbReference type="Pfam" id="PF02637">
    <property type="entry name" value="GatB_Yqey"/>
    <property type="match status" value="1"/>
</dbReference>
<dbReference type="SMART" id="SM00845">
    <property type="entry name" value="GatB_Yqey"/>
    <property type="match status" value="1"/>
</dbReference>
<dbReference type="SUPFAM" id="SSF89095">
    <property type="entry name" value="GatB/YqeY motif"/>
    <property type="match status" value="1"/>
</dbReference>
<dbReference type="SUPFAM" id="SSF55931">
    <property type="entry name" value="Glutamine synthetase/guanido kinase"/>
    <property type="match status" value="1"/>
</dbReference>
<dbReference type="PROSITE" id="PS01234">
    <property type="entry name" value="GATB"/>
    <property type="match status" value="1"/>
</dbReference>
<feature type="chain" id="PRO_0000241281" description="Aspartyl/glutamyl-tRNA(Asn/Gln) amidotransferase subunit B">
    <location>
        <begin position="1"/>
        <end position="479"/>
    </location>
</feature>
<organism>
    <name type="scientific">Streptococcus pyogenes serotype M28 (strain MGAS6180)</name>
    <dbReference type="NCBI Taxonomy" id="319701"/>
    <lineage>
        <taxon>Bacteria</taxon>
        <taxon>Bacillati</taxon>
        <taxon>Bacillota</taxon>
        <taxon>Bacilli</taxon>
        <taxon>Lactobacillales</taxon>
        <taxon>Streptococcaceae</taxon>
        <taxon>Streptococcus</taxon>
    </lineage>
</organism>
<reference key="1">
    <citation type="journal article" date="2005" name="J. Infect. Dis.">
        <title>Genome sequence of a serotype M28 strain of group A Streptococcus: potential new insights into puerperal sepsis and bacterial disease specificity.</title>
        <authorList>
            <person name="Green N.M."/>
            <person name="Zhang S."/>
            <person name="Porcella S.F."/>
            <person name="Nagiec M.J."/>
            <person name="Barbian K.D."/>
            <person name="Beres S.B."/>
            <person name="Lefebvre R.B."/>
            <person name="Musser J.M."/>
        </authorList>
    </citation>
    <scope>NUCLEOTIDE SEQUENCE [LARGE SCALE GENOMIC DNA]</scope>
    <source>
        <strain>MGAS6180</strain>
    </source>
</reference>
<gene>
    <name evidence="1" type="primary">gatB</name>
    <name type="ordered locus">M28_Spy1495</name>
</gene>